<keyword id="KW-0378">Hydrolase</keyword>
<keyword id="KW-0408">Iron</keyword>
<keyword id="KW-0479">Metal-binding</keyword>
<keyword id="KW-0648">Protein biosynthesis</keyword>
<keyword id="KW-1185">Reference proteome</keyword>
<evidence type="ECO:0000255" key="1">
    <source>
        <dbReference type="HAMAP-Rule" id="MF_00163"/>
    </source>
</evidence>
<reference key="1">
    <citation type="journal article" date="2009" name="PLoS Genet.">
        <title>Organised genome dynamics in the Escherichia coli species results in highly diverse adaptive paths.</title>
        <authorList>
            <person name="Touchon M."/>
            <person name="Hoede C."/>
            <person name="Tenaillon O."/>
            <person name="Barbe V."/>
            <person name="Baeriswyl S."/>
            <person name="Bidet P."/>
            <person name="Bingen E."/>
            <person name="Bonacorsi S."/>
            <person name="Bouchier C."/>
            <person name="Bouvet O."/>
            <person name="Calteau A."/>
            <person name="Chiapello H."/>
            <person name="Clermont O."/>
            <person name="Cruveiller S."/>
            <person name="Danchin A."/>
            <person name="Diard M."/>
            <person name="Dossat C."/>
            <person name="Karoui M.E."/>
            <person name="Frapy E."/>
            <person name="Garry L."/>
            <person name="Ghigo J.M."/>
            <person name="Gilles A.M."/>
            <person name="Johnson J."/>
            <person name="Le Bouguenec C."/>
            <person name="Lescat M."/>
            <person name="Mangenot S."/>
            <person name="Martinez-Jehanne V."/>
            <person name="Matic I."/>
            <person name="Nassif X."/>
            <person name="Oztas S."/>
            <person name="Petit M.A."/>
            <person name="Pichon C."/>
            <person name="Rouy Z."/>
            <person name="Ruf C.S."/>
            <person name="Schneider D."/>
            <person name="Tourret J."/>
            <person name="Vacherie B."/>
            <person name="Vallenet D."/>
            <person name="Medigue C."/>
            <person name="Rocha E.P.C."/>
            <person name="Denamur E."/>
        </authorList>
    </citation>
    <scope>NUCLEOTIDE SEQUENCE [LARGE SCALE GENOMIC DNA]</scope>
    <source>
        <strain>55989 / EAEC</strain>
    </source>
</reference>
<gene>
    <name evidence="1" type="primary">def</name>
    <name type="ordered locus">EC55989_3703</name>
</gene>
<dbReference type="EC" id="3.5.1.88" evidence="1"/>
<dbReference type="EMBL" id="CU928145">
    <property type="protein sequence ID" value="CAU99982.1"/>
    <property type="molecule type" value="Genomic_DNA"/>
</dbReference>
<dbReference type="RefSeq" id="WP_000114984.1">
    <property type="nucleotide sequence ID" value="NZ_CP028304.1"/>
</dbReference>
<dbReference type="SMR" id="B7LHY3"/>
<dbReference type="GeneID" id="89518132"/>
<dbReference type="KEGG" id="eck:EC55989_3703"/>
<dbReference type="HOGENOM" id="CLU_061901_2_1_6"/>
<dbReference type="Proteomes" id="UP000000746">
    <property type="component" value="Chromosome"/>
</dbReference>
<dbReference type="GO" id="GO:0046872">
    <property type="term" value="F:metal ion binding"/>
    <property type="evidence" value="ECO:0007669"/>
    <property type="project" value="UniProtKB-KW"/>
</dbReference>
<dbReference type="GO" id="GO:0042586">
    <property type="term" value="F:peptide deformylase activity"/>
    <property type="evidence" value="ECO:0007669"/>
    <property type="project" value="UniProtKB-UniRule"/>
</dbReference>
<dbReference type="GO" id="GO:0043686">
    <property type="term" value="P:co-translational protein modification"/>
    <property type="evidence" value="ECO:0007669"/>
    <property type="project" value="TreeGrafter"/>
</dbReference>
<dbReference type="GO" id="GO:0006412">
    <property type="term" value="P:translation"/>
    <property type="evidence" value="ECO:0007669"/>
    <property type="project" value="UniProtKB-UniRule"/>
</dbReference>
<dbReference type="CDD" id="cd00487">
    <property type="entry name" value="Pep_deformylase"/>
    <property type="match status" value="1"/>
</dbReference>
<dbReference type="FunFam" id="3.90.45.10:FF:000001">
    <property type="entry name" value="Peptide deformylase"/>
    <property type="match status" value="1"/>
</dbReference>
<dbReference type="Gene3D" id="3.90.45.10">
    <property type="entry name" value="Peptide deformylase"/>
    <property type="match status" value="1"/>
</dbReference>
<dbReference type="HAMAP" id="MF_00163">
    <property type="entry name" value="Pep_deformylase"/>
    <property type="match status" value="1"/>
</dbReference>
<dbReference type="InterPro" id="IPR023635">
    <property type="entry name" value="Peptide_deformylase"/>
</dbReference>
<dbReference type="InterPro" id="IPR036821">
    <property type="entry name" value="Peptide_deformylase_sf"/>
</dbReference>
<dbReference type="NCBIfam" id="TIGR00079">
    <property type="entry name" value="pept_deformyl"/>
    <property type="match status" value="1"/>
</dbReference>
<dbReference type="NCBIfam" id="NF001159">
    <property type="entry name" value="PRK00150.1-3"/>
    <property type="match status" value="1"/>
</dbReference>
<dbReference type="PANTHER" id="PTHR10458">
    <property type="entry name" value="PEPTIDE DEFORMYLASE"/>
    <property type="match status" value="1"/>
</dbReference>
<dbReference type="PANTHER" id="PTHR10458:SF21">
    <property type="entry name" value="PEPTIDE DEFORMYLASE"/>
    <property type="match status" value="1"/>
</dbReference>
<dbReference type="Pfam" id="PF01327">
    <property type="entry name" value="Pep_deformylase"/>
    <property type="match status" value="1"/>
</dbReference>
<dbReference type="PIRSF" id="PIRSF004749">
    <property type="entry name" value="Pep_def"/>
    <property type="match status" value="1"/>
</dbReference>
<dbReference type="PRINTS" id="PR01576">
    <property type="entry name" value="PDEFORMYLASE"/>
</dbReference>
<dbReference type="SUPFAM" id="SSF56420">
    <property type="entry name" value="Peptide deformylase"/>
    <property type="match status" value="1"/>
</dbReference>
<feature type="chain" id="PRO_1000200726" description="Peptide deformylase">
    <location>
        <begin position="1"/>
        <end position="169"/>
    </location>
</feature>
<feature type="active site" evidence="1">
    <location>
        <position position="134"/>
    </location>
</feature>
<feature type="binding site" evidence="1">
    <location>
        <position position="91"/>
    </location>
    <ligand>
        <name>Fe cation</name>
        <dbReference type="ChEBI" id="CHEBI:24875"/>
    </ligand>
</feature>
<feature type="binding site" evidence="1">
    <location>
        <position position="133"/>
    </location>
    <ligand>
        <name>Fe cation</name>
        <dbReference type="ChEBI" id="CHEBI:24875"/>
    </ligand>
</feature>
<feature type="binding site" evidence="1">
    <location>
        <position position="137"/>
    </location>
    <ligand>
        <name>Fe cation</name>
        <dbReference type="ChEBI" id="CHEBI:24875"/>
    </ligand>
</feature>
<proteinExistence type="inferred from homology"/>
<name>DEF_ECO55</name>
<accession>B7LHY3</accession>
<organism>
    <name type="scientific">Escherichia coli (strain 55989 / EAEC)</name>
    <dbReference type="NCBI Taxonomy" id="585055"/>
    <lineage>
        <taxon>Bacteria</taxon>
        <taxon>Pseudomonadati</taxon>
        <taxon>Pseudomonadota</taxon>
        <taxon>Gammaproteobacteria</taxon>
        <taxon>Enterobacterales</taxon>
        <taxon>Enterobacteriaceae</taxon>
        <taxon>Escherichia</taxon>
    </lineage>
</organism>
<sequence>MSVLQVLHIPDERLRKVAKPVEEVNAEIQRIVDDMFETMYAEEGIGLAATQVDIHQRIIVIDVSENRDERLVLINPELLEKSGETGIEEGCLSIPEQRALVPRAEKVKIRALDRDGKPFELEADGLLAICIQHEMDHLVGKLFMDYLSPLKQQRIRQKVEKLDRLKARA</sequence>
<protein>
    <recommendedName>
        <fullName evidence="1">Peptide deformylase</fullName>
        <shortName evidence="1">PDF</shortName>
        <ecNumber evidence="1">3.5.1.88</ecNumber>
    </recommendedName>
    <alternativeName>
        <fullName evidence="1">Polypeptide deformylase</fullName>
    </alternativeName>
</protein>
<comment type="function">
    <text evidence="1">Removes the formyl group from the N-terminal Met of newly synthesized proteins. Requires at least a dipeptide for an efficient rate of reaction. N-terminal L-methionine is a prerequisite for activity but the enzyme has broad specificity at other positions.</text>
</comment>
<comment type="catalytic activity">
    <reaction evidence="1">
        <text>N-terminal N-formyl-L-methionyl-[peptide] + H2O = N-terminal L-methionyl-[peptide] + formate</text>
        <dbReference type="Rhea" id="RHEA:24420"/>
        <dbReference type="Rhea" id="RHEA-COMP:10639"/>
        <dbReference type="Rhea" id="RHEA-COMP:10640"/>
        <dbReference type="ChEBI" id="CHEBI:15377"/>
        <dbReference type="ChEBI" id="CHEBI:15740"/>
        <dbReference type="ChEBI" id="CHEBI:49298"/>
        <dbReference type="ChEBI" id="CHEBI:64731"/>
        <dbReference type="EC" id="3.5.1.88"/>
    </reaction>
</comment>
<comment type="cofactor">
    <cofactor evidence="1">
        <name>Fe(2+)</name>
        <dbReference type="ChEBI" id="CHEBI:29033"/>
    </cofactor>
    <text evidence="1">Binds 1 Fe(2+) ion.</text>
</comment>
<comment type="similarity">
    <text evidence="1">Belongs to the polypeptide deformylase family.</text>
</comment>